<gene>
    <name evidence="1" type="primary">lepA</name>
    <name type="ordered locus">Z3851</name>
    <name type="ordered locus">ECs3435</name>
</gene>
<protein>
    <recommendedName>
        <fullName evidence="1">Elongation factor 4</fullName>
        <shortName evidence="1">EF-4</shortName>
        <ecNumber evidence="1">3.6.5.n1</ecNumber>
    </recommendedName>
    <alternativeName>
        <fullName evidence="1">Ribosomal back-translocase LepA</fullName>
    </alternativeName>
</protein>
<comment type="function">
    <text evidence="1">Required for accurate and efficient protein synthesis under certain stress conditions. May act as a fidelity factor of the translation reaction, by catalyzing a one-codon backward translocation of tRNAs on improperly translocated ribosomes. Back-translocation proceeds from a post-translocation (POST) complex to a pre-translocation (PRE) complex, thus giving elongation factor G a second chance to translocate the tRNAs correctly. Binds to ribosomes in a GTP-dependent manner.</text>
</comment>
<comment type="catalytic activity">
    <reaction evidence="1">
        <text>GTP + H2O = GDP + phosphate + H(+)</text>
        <dbReference type="Rhea" id="RHEA:19669"/>
        <dbReference type="ChEBI" id="CHEBI:15377"/>
        <dbReference type="ChEBI" id="CHEBI:15378"/>
        <dbReference type="ChEBI" id="CHEBI:37565"/>
        <dbReference type="ChEBI" id="CHEBI:43474"/>
        <dbReference type="ChEBI" id="CHEBI:58189"/>
        <dbReference type="EC" id="3.6.5.n1"/>
    </reaction>
</comment>
<comment type="subcellular location">
    <subcellularLocation>
        <location evidence="1">Cell inner membrane</location>
        <topology evidence="1">Peripheral membrane protein</topology>
        <orientation evidence="1">Cytoplasmic side</orientation>
    </subcellularLocation>
</comment>
<comment type="similarity">
    <text evidence="1">Belongs to the TRAFAC class translation factor GTPase superfamily. Classic translation factor GTPase family. LepA subfamily.</text>
</comment>
<keyword id="KW-0997">Cell inner membrane</keyword>
<keyword id="KW-1003">Cell membrane</keyword>
<keyword id="KW-0342">GTP-binding</keyword>
<keyword id="KW-0378">Hydrolase</keyword>
<keyword id="KW-0472">Membrane</keyword>
<keyword id="KW-0547">Nucleotide-binding</keyword>
<keyword id="KW-0648">Protein biosynthesis</keyword>
<keyword id="KW-1185">Reference proteome</keyword>
<sequence length="599" mass="66570">MKNIRNFSIIAHIDHGKSTLSDRIIQICGGLSDREMEAQVLDSMDLERERGITIKAQSVTLDYKASDGETYQLNFIDTPGHVDFSYEVSRSLAACEGALLVVDAGQGVEAQTLANCYTAMEMDLEVVPVLNKIDLPAADPERVAEEIEDIVGIDATDAVRCSAKTGVGVQDVLERLVRDIPPPEGDPEGPLQALIIDSWFDNYLGVVSLIRIKNGTLRKGDKVKVMSTGQTYNADRLGIFTPKQVDRTELKCGEVGWLVCAIKDIHGAPVGDTLTLARNPAEKALPGFKKVKPQVYAGLFPVSSDDYEAFRDALGKLSLNDASLFYEPESSSALGFGFRCGFLGLLHMEIIQERLEREYDLDLITTAPTVVYEVETTSREVIYVDSPSKLPAVNNIYELREPIAECHMLLPQAYLGNVITLCVEKRGVQTNMVYHGNQVALTYEIPMAEVVLDFFDRLKSTSRGYASLDYNFKRFQASDMVRVDVLINGERVDALALITHRDNSQNRGRELVEKMKDLIPRQQFDIAIQAAIGTHIIARSTVKQLRKNVLAKCYGGDISRKKKLLQKQKEGKKRMKQIGNVELPQEAFLAILHVGKDNK</sequence>
<accession>P60787</accession>
<accession>P07682</accession>
<accession>P76590</accession>
<proteinExistence type="inferred from homology"/>
<reference key="1">
    <citation type="journal article" date="2001" name="Nature">
        <title>Genome sequence of enterohaemorrhagic Escherichia coli O157:H7.</title>
        <authorList>
            <person name="Perna N.T."/>
            <person name="Plunkett G. III"/>
            <person name="Burland V."/>
            <person name="Mau B."/>
            <person name="Glasner J.D."/>
            <person name="Rose D.J."/>
            <person name="Mayhew G.F."/>
            <person name="Evans P.S."/>
            <person name="Gregor J."/>
            <person name="Kirkpatrick H.A."/>
            <person name="Posfai G."/>
            <person name="Hackett J."/>
            <person name="Klink S."/>
            <person name="Boutin A."/>
            <person name="Shao Y."/>
            <person name="Miller L."/>
            <person name="Grotbeck E.J."/>
            <person name="Davis N.W."/>
            <person name="Lim A."/>
            <person name="Dimalanta E.T."/>
            <person name="Potamousis K."/>
            <person name="Apodaca J."/>
            <person name="Anantharaman T.S."/>
            <person name="Lin J."/>
            <person name="Yen G."/>
            <person name="Schwartz D.C."/>
            <person name="Welch R.A."/>
            <person name="Blattner F.R."/>
        </authorList>
    </citation>
    <scope>NUCLEOTIDE SEQUENCE [LARGE SCALE GENOMIC DNA]</scope>
    <source>
        <strain>O157:H7 / EDL933 / ATCC 700927 / EHEC</strain>
    </source>
</reference>
<reference key="2">
    <citation type="journal article" date="2001" name="DNA Res.">
        <title>Complete genome sequence of enterohemorrhagic Escherichia coli O157:H7 and genomic comparison with a laboratory strain K-12.</title>
        <authorList>
            <person name="Hayashi T."/>
            <person name="Makino K."/>
            <person name="Ohnishi M."/>
            <person name="Kurokawa K."/>
            <person name="Ishii K."/>
            <person name="Yokoyama K."/>
            <person name="Han C.-G."/>
            <person name="Ohtsubo E."/>
            <person name="Nakayama K."/>
            <person name="Murata T."/>
            <person name="Tanaka M."/>
            <person name="Tobe T."/>
            <person name="Iida T."/>
            <person name="Takami H."/>
            <person name="Honda T."/>
            <person name="Sasakawa C."/>
            <person name="Ogasawara N."/>
            <person name="Yasunaga T."/>
            <person name="Kuhara S."/>
            <person name="Shiba T."/>
            <person name="Hattori M."/>
            <person name="Shinagawa H."/>
        </authorList>
    </citation>
    <scope>NUCLEOTIDE SEQUENCE [LARGE SCALE GENOMIC DNA]</scope>
    <source>
        <strain>O157:H7 / Sakai / RIMD 0509952 / EHEC</strain>
    </source>
</reference>
<dbReference type="EC" id="3.6.5.n1" evidence="1"/>
<dbReference type="EMBL" id="AE005174">
    <property type="protein sequence ID" value="AAG57685.1"/>
    <property type="molecule type" value="Genomic_DNA"/>
</dbReference>
<dbReference type="EMBL" id="BA000007">
    <property type="protein sequence ID" value="BAB36858.1"/>
    <property type="molecule type" value="Genomic_DNA"/>
</dbReference>
<dbReference type="PIR" id="A85903">
    <property type="entry name" value="A85903"/>
</dbReference>
<dbReference type="PIR" id="C91058">
    <property type="entry name" value="C91058"/>
</dbReference>
<dbReference type="RefSeq" id="NP_311462.1">
    <property type="nucleotide sequence ID" value="NC_002695.1"/>
</dbReference>
<dbReference type="RefSeq" id="WP_000790168.1">
    <property type="nucleotide sequence ID" value="NZ_VOAI01000001.1"/>
</dbReference>
<dbReference type="SMR" id="P60787"/>
<dbReference type="STRING" id="155864.Z3851"/>
<dbReference type="GeneID" id="915772"/>
<dbReference type="GeneID" id="93774522"/>
<dbReference type="KEGG" id="ece:Z3851"/>
<dbReference type="KEGG" id="ecs:ECs_3435"/>
<dbReference type="PATRIC" id="fig|386585.9.peg.3589"/>
<dbReference type="eggNOG" id="COG0481">
    <property type="taxonomic scope" value="Bacteria"/>
</dbReference>
<dbReference type="HOGENOM" id="CLU_009995_3_3_6"/>
<dbReference type="OMA" id="QVKCDEN"/>
<dbReference type="Proteomes" id="UP000000558">
    <property type="component" value="Chromosome"/>
</dbReference>
<dbReference type="Proteomes" id="UP000002519">
    <property type="component" value="Chromosome"/>
</dbReference>
<dbReference type="GO" id="GO:0005886">
    <property type="term" value="C:plasma membrane"/>
    <property type="evidence" value="ECO:0007669"/>
    <property type="project" value="UniProtKB-SubCell"/>
</dbReference>
<dbReference type="GO" id="GO:0005525">
    <property type="term" value="F:GTP binding"/>
    <property type="evidence" value="ECO:0007669"/>
    <property type="project" value="UniProtKB-UniRule"/>
</dbReference>
<dbReference type="GO" id="GO:0003924">
    <property type="term" value="F:GTPase activity"/>
    <property type="evidence" value="ECO:0007669"/>
    <property type="project" value="UniProtKB-UniRule"/>
</dbReference>
<dbReference type="GO" id="GO:0097216">
    <property type="term" value="F:guanosine tetraphosphate binding"/>
    <property type="evidence" value="ECO:0007669"/>
    <property type="project" value="UniProtKB-ARBA"/>
</dbReference>
<dbReference type="GO" id="GO:0043022">
    <property type="term" value="F:ribosome binding"/>
    <property type="evidence" value="ECO:0007669"/>
    <property type="project" value="UniProtKB-UniRule"/>
</dbReference>
<dbReference type="GO" id="GO:0003746">
    <property type="term" value="F:translation elongation factor activity"/>
    <property type="evidence" value="ECO:0007669"/>
    <property type="project" value="UniProtKB-UniRule"/>
</dbReference>
<dbReference type="GO" id="GO:0045727">
    <property type="term" value="P:positive regulation of translation"/>
    <property type="evidence" value="ECO:0007669"/>
    <property type="project" value="UniProtKB-UniRule"/>
</dbReference>
<dbReference type="CDD" id="cd03699">
    <property type="entry name" value="EF4_II"/>
    <property type="match status" value="1"/>
</dbReference>
<dbReference type="CDD" id="cd16260">
    <property type="entry name" value="EF4_III"/>
    <property type="match status" value="1"/>
</dbReference>
<dbReference type="CDD" id="cd01890">
    <property type="entry name" value="LepA"/>
    <property type="match status" value="1"/>
</dbReference>
<dbReference type="CDD" id="cd03709">
    <property type="entry name" value="lepA_C"/>
    <property type="match status" value="1"/>
</dbReference>
<dbReference type="FunFam" id="3.30.70.240:FF:000005">
    <property type="entry name" value="Elongation factor 4"/>
    <property type="match status" value="1"/>
</dbReference>
<dbReference type="FunFam" id="3.40.50.300:FF:000078">
    <property type="entry name" value="Elongation factor 4"/>
    <property type="match status" value="1"/>
</dbReference>
<dbReference type="FunFam" id="2.40.30.10:FF:000015">
    <property type="entry name" value="Translation factor GUF1, mitochondrial"/>
    <property type="match status" value="1"/>
</dbReference>
<dbReference type="FunFam" id="3.30.70.2570:FF:000001">
    <property type="entry name" value="Translation factor GUF1, mitochondrial"/>
    <property type="match status" value="1"/>
</dbReference>
<dbReference type="FunFam" id="3.30.70.870:FF:000004">
    <property type="entry name" value="Translation factor GUF1, mitochondrial"/>
    <property type="match status" value="1"/>
</dbReference>
<dbReference type="Gene3D" id="3.30.70.240">
    <property type="match status" value="1"/>
</dbReference>
<dbReference type="Gene3D" id="3.30.70.2570">
    <property type="entry name" value="Elongation factor 4, C-terminal domain"/>
    <property type="match status" value="1"/>
</dbReference>
<dbReference type="Gene3D" id="3.30.70.870">
    <property type="entry name" value="Elongation Factor G (Translational Gtpase), domain 3"/>
    <property type="match status" value="1"/>
</dbReference>
<dbReference type="Gene3D" id="3.40.50.300">
    <property type="entry name" value="P-loop containing nucleotide triphosphate hydrolases"/>
    <property type="match status" value="1"/>
</dbReference>
<dbReference type="Gene3D" id="2.40.30.10">
    <property type="entry name" value="Translation factors"/>
    <property type="match status" value="1"/>
</dbReference>
<dbReference type="HAMAP" id="MF_00071">
    <property type="entry name" value="LepA"/>
    <property type="match status" value="1"/>
</dbReference>
<dbReference type="InterPro" id="IPR006297">
    <property type="entry name" value="EF-4"/>
</dbReference>
<dbReference type="InterPro" id="IPR035647">
    <property type="entry name" value="EFG_III/V"/>
</dbReference>
<dbReference type="InterPro" id="IPR000640">
    <property type="entry name" value="EFG_V-like"/>
</dbReference>
<dbReference type="InterPro" id="IPR004161">
    <property type="entry name" value="EFTu-like_2"/>
</dbReference>
<dbReference type="InterPro" id="IPR031157">
    <property type="entry name" value="G_TR_CS"/>
</dbReference>
<dbReference type="InterPro" id="IPR038363">
    <property type="entry name" value="LepA_C_sf"/>
</dbReference>
<dbReference type="InterPro" id="IPR013842">
    <property type="entry name" value="LepA_CTD"/>
</dbReference>
<dbReference type="InterPro" id="IPR035654">
    <property type="entry name" value="LepA_IV"/>
</dbReference>
<dbReference type="InterPro" id="IPR027417">
    <property type="entry name" value="P-loop_NTPase"/>
</dbReference>
<dbReference type="InterPro" id="IPR005225">
    <property type="entry name" value="Small_GTP-bd"/>
</dbReference>
<dbReference type="InterPro" id="IPR000795">
    <property type="entry name" value="T_Tr_GTP-bd_dom"/>
</dbReference>
<dbReference type="NCBIfam" id="TIGR01393">
    <property type="entry name" value="lepA"/>
    <property type="match status" value="1"/>
</dbReference>
<dbReference type="NCBIfam" id="TIGR00231">
    <property type="entry name" value="small_GTP"/>
    <property type="match status" value="1"/>
</dbReference>
<dbReference type="PANTHER" id="PTHR43512:SF4">
    <property type="entry name" value="TRANSLATION FACTOR GUF1 HOMOLOG, CHLOROPLASTIC"/>
    <property type="match status" value="1"/>
</dbReference>
<dbReference type="PANTHER" id="PTHR43512">
    <property type="entry name" value="TRANSLATION FACTOR GUF1-RELATED"/>
    <property type="match status" value="1"/>
</dbReference>
<dbReference type="Pfam" id="PF00679">
    <property type="entry name" value="EFG_C"/>
    <property type="match status" value="1"/>
</dbReference>
<dbReference type="Pfam" id="PF00009">
    <property type="entry name" value="GTP_EFTU"/>
    <property type="match status" value="1"/>
</dbReference>
<dbReference type="Pfam" id="PF03144">
    <property type="entry name" value="GTP_EFTU_D2"/>
    <property type="match status" value="1"/>
</dbReference>
<dbReference type="Pfam" id="PF06421">
    <property type="entry name" value="LepA_C"/>
    <property type="match status" value="1"/>
</dbReference>
<dbReference type="PRINTS" id="PR00315">
    <property type="entry name" value="ELONGATNFCT"/>
</dbReference>
<dbReference type="SUPFAM" id="SSF54980">
    <property type="entry name" value="EF-G C-terminal domain-like"/>
    <property type="match status" value="2"/>
</dbReference>
<dbReference type="SUPFAM" id="SSF52540">
    <property type="entry name" value="P-loop containing nucleoside triphosphate hydrolases"/>
    <property type="match status" value="1"/>
</dbReference>
<dbReference type="PROSITE" id="PS00301">
    <property type="entry name" value="G_TR_1"/>
    <property type="match status" value="1"/>
</dbReference>
<dbReference type="PROSITE" id="PS51722">
    <property type="entry name" value="G_TR_2"/>
    <property type="match status" value="1"/>
</dbReference>
<name>LEPA_ECO57</name>
<evidence type="ECO:0000255" key="1">
    <source>
        <dbReference type="HAMAP-Rule" id="MF_00071"/>
    </source>
</evidence>
<organism>
    <name type="scientific">Escherichia coli O157:H7</name>
    <dbReference type="NCBI Taxonomy" id="83334"/>
    <lineage>
        <taxon>Bacteria</taxon>
        <taxon>Pseudomonadati</taxon>
        <taxon>Pseudomonadota</taxon>
        <taxon>Gammaproteobacteria</taxon>
        <taxon>Enterobacterales</taxon>
        <taxon>Enterobacteriaceae</taxon>
        <taxon>Escherichia</taxon>
    </lineage>
</organism>
<feature type="chain" id="PRO_0000176273" description="Elongation factor 4">
    <location>
        <begin position="1"/>
        <end position="599"/>
    </location>
</feature>
<feature type="domain" description="tr-type G">
    <location>
        <begin position="2"/>
        <end position="184"/>
    </location>
</feature>
<feature type="binding site" evidence="1">
    <location>
        <begin position="14"/>
        <end position="19"/>
    </location>
    <ligand>
        <name>GTP</name>
        <dbReference type="ChEBI" id="CHEBI:37565"/>
    </ligand>
</feature>
<feature type="binding site" evidence="1">
    <location>
        <begin position="131"/>
        <end position="134"/>
    </location>
    <ligand>
        <name>GTP</name>
        <dbReference type="ChEBI" id="CHEBI:37565"/>
    </ligand>
</feature>